<protein>
    <recommendedName>
        <fullName>Ras-related protein Rab-27A</fullName>
        <shortName>Rab-27</shortName>
        <ecNumber evidence="2">3.6.5.2</ecNumber>
    </recommendedName>
    <alternativeName>
        <fullName>GTP-binding protein Ram</fullName>
    </alternativeName>
    <alternativeName>
        <fullName>Ram p25</fullName>
    </alternativeName>
</protein>
<proteinExistence type="evidence at protein level"/>
<comment type="function">
    <text evidence="2">Small GTPase which cycles between active GTP-bound and inactive GDP-bound states. In its active state, binds to a variety of effector proteins to regulate homeostasis of late endocytic pathway, including endosomal positioning, maturation and secretion. Plays a role in cytotoxic granule exocytosis in lymphocytes. Required for both granule maturation and granule docking and priming at the immunologic synapse.</text>
</comment>
<comment type="catalytic activity">
    <reaction evidence="2">
        <text>GTP + H2O = GDP + phosphate + H(+)</text>
        <dbReference type="Rhea" id="RHEA:19669"/>
        <dbReference type="ChEBI" id="CHEBI:15377"/>
        <dbReference type="ChEBI" id="CHEBI:15378"/>
        <dbReference type="ChEBI" id="CHEBI:37565"/>
        <dbReference type="ChEBI" id="CHEBI:43474"/>
        <dbReference type="ChEBI" id="CHEBI:58189"/>
        <dbReference type="EC" id="3.6.5.2"/>
    </reaction>
    <physiologicalReaction direction="left-to-right" evidence="2">
        <dbReference type="Rhea" id="RHEA:19670"/>
    </physiologicalReaction>
</comment>
<comment type="activity regulation">
    <text evidence="2">Regulated by guanine nucleotide exchange factors (GEFs) which promote the exchange of bound GDP for free GTP, GTPase activating proteins (GAPs) which increase the GTP hydrolysis activity, and GDP dissociation inhibitors which inhibit the dissociation of the nucleotide from the GTPase. Activated by GEFs such as DENND10.</text>
</comment>
<comment type="subunit">
    <text evidence="2 3">Binds SYTL1, SLAC2B, MYRIP, SYTL3, SYTL4 and SYTL5. Interacts with RPH3A and RPH3A (By similarity). Binds MLPH and SYTL2. Interacts with UNC13D. Does not interact with the BLOC-3 complex (heterodimer of HPS1 and HPS4) (By similarity). Interacts (GDP-bound form preferentially) with DENND10 (By similarity).</text>
</comment>
<comment type="subcellular location">
    <subcellularLocation>
        <location evidence="2">Membrane</location>
        <topology evidence="2">Lipid-anchor</topology>
    </subcellularLocation>
    <subcellularLocation>
        <location evidence="2">Melanosome</location>
    </subcellularLocation>
    <subcellularLocation>
        <location evidence="2">Late endosome</location>
    </subcellularLocation>
    <subcellularLocation>
        <location evidence="2">Lysosome</location>
    </subcellularLocation>
    <text evidence="2">Identified by mass spectrometry in melanosome fractions from stage I to stage IV. Localizes to endosomal exocytic vesicles.</text>
</comment>
<comment type="tissue specificity">
    <text>High levels in eye, intestine, lung, pancreas and spleen, and low or absent in brain, liver, heart, kidney, and skeletal muscle.</text>
</comment>
<comment type="similarity">
    <text evidence="5">Belongs to the small GTPase superfamily. Rab family.</text>
</comment>
<dbReference type="EC" id="3.6.5.2" evidence="2"/>
<dbReference type="EMBL" id="D17352">
    <property type="protein sequence ID" value="BAA04167.1"/>
    <property type="molecule type" value="mRNA"/>
</dbReference>
<dbReference type="EMBL" id="BC098667">
    <property type="protein sequence ID" value="AAH98667.1"/>
    <property type="molecule type" value="mRNA"/>
</dbReference>
<dbReference type="PIR" id="S12959">
    <property type="entry name" value="S12959"/>
</dbReference>
<dbReference type="RefSeq" id="NP_059013.1">
    <property type="nucleotide sequence ID" value="NM_017317.2"/>
</dbReference>
<dbReference type="RefSeq" id="XP_017451353.1">
    <property type="nucleotide sequence ID" value="XM_017595864.1"/>
</dbReference>
<dbReference type="RefSeq" id="XP_038937932.1">
    <property type="nucleotide sequence ID" value="XM_039082004.2"/>
</dbReference>
<dbReference type="RefSeq" id="XP_063122103.1">
    <property type="nucleotide sequence ID" value="XM_063266033.1"/>
</dbReference>
<dbReference type="RefSeq" id="XP_063122104.1">
    <property type="nucleotide sequence ID" value="XM_063266034.1"/>
</dbReference>
<dbReference type="RefSeq" id="XP_063122105.1">
    <property type="nucleotide sequence ID" value="XM_063266035.1"/>
</dbReference>
<dbReference type="SMR" id="P23640"/>
<dbReference type="FunCoup" id="P23640">
    <property type="interactions" value="814"/>
</dbReference>
<dbReference type="STRING" id="10116.ENSRNOP00000068946"/>
<dbReference type="PhosphoSitePlus" id="P23640"/>
<dbReference type="jPOST" id="P23640"/>
<dbReference type="PaxDb" id="10116-ENSRNOP00000010012"/>
<dbReference type="Ensembl" id="ENSRNOT00000083957.2">
    <property type="protein sequence ID" value="ENSRNOP00000068946.1"/>
    <property type="gene ID" value="ENSRNOG00000052499.2"/>
</dbReference>
<dbReference type="GeneID" id="50645"/>
<dbReference type="KEGG" id="rno:50645"/>
<dbReference type="UCSC" id="RGD:620918">
    <property type="organism name" value="rat"/>
</dbReference>
<dbReference type="AGR" id="RGD:620918"/>
<dbReference type="CTD" id="5873"/>
<dbReference type="RGD" id="620918">
    <property type="gene designation" value="Rab27a"/>
</dbReference>
<dbReference type="eggNOG" id="KOG0081">
    <property type="taxonomic scope" value="Eukaryota"/>
</dbReference>
<dbReference type="GeneTree" id="ENSGT00940000156218"/>
<dbReference type="HOGENOM" id="CLU_041217_10_1_1"/>
<dbReference type="InParanoid" id="P23640"/>
<dbReference type="OMA" id="MHAYTED"/>
<dbReference type="OrthoDB" id="9989112at2759"/>
<dbReference type="PhylomeDB" id="P23640"/>
<dbReference type="TreeFam" id="TF312895"/>
<dbReference type="Reactome" id="R-RNO-6798695">
    <property type="pathway name" value="Neutrophil degranulation"/>
</dbReference>
<dbReference type="Reactome" id="R-RNO-8873719">
    <property type="pathway name" value="RAB geranylgeranylation"/>
</dbReference>
<dbReference type="Reactome" id="R-RNO-8876198">
    <property type="pathway name" value="RAB GEFs exchange GTP for GDP on RABs"/>
</dbReference>
<dbReference type="Reactome" id="R-RNO-9824585">
    <property type="pathway name" value="Regulation of MITF-M-dependent genes involved in pigmentation"/>
</dbReference>
<dbReference type="PRO" id="PR:P23640"/>
<dbReference type="Proteomes" id="UP000002494">
    <property type="component" value="Chromosome 8"/>
</dbReference>
<dbReference type="Bgee" id="ENSRNOG00000052499">
    <property type="expression patterns" value="Expressed in stomach and 19 other cell types or tissues"/>
</dbReference>
<dbReference type="GO" id="GO:0016324">
    <property type="term" value="C:apical plasma membrane"/>
    <property type="evidence" value="ECO:0000314"/>
    <property type="project" value="RGD"/>
</dbReference>
<dbReference type="GO" id="GO:0030425">
    <property type="term" value="C:dendrite"/>
    <property type="evidence" value="ECO:0000266"/>
    <property type="project" value="RGD"/>
</dbReference>
<dbReference type="GO" id="GO:0070382">
    <property type="term" value="C:exocytic vesicle"/>
    <property type="evidence" value="ECO:0000266"/>
    <property type="project" value="RGD"/>
</dbReference>
<dbReference type="GO" id="GO:0005794">
    <property type="term" value="C:Golgi apparatus"/>
    <property type="evidence" value="ECO:0000266"/>
    <property type="project" value="RGD"/>
</dbReference>
<dbReference type="GO" id="GO:0005770">
    <property type="term" value="C:late endosome"/>
    <property type="evidence" value="ECO:0000250"/>
    <property type="project" value="UniProtKB"/>
</dbReference>
<dbReference type="GO" id="GO:0005764">
    <property type="term" value="C:lysosome"/>
    <property type="evidence" value="ECO:0000266"/>
    <property type="project" value="RGD"/>
</dbReference>
<dbReference type="GO" id="GO:0042470">
    <property type="term" value="C:melanosome"/>
    <property type="evidence" value="ECO:0000314"/>
    <property type="project" value="RGD"/>
</dbReference>
<dbReference type="GO" id="GO:0032585">
    <property type="term" value="C:multivesicular body membrane"/>
    <property type="evidence" value="ECO:0000266"/>
    <property type="project" value="RGD"/>
</dbReference>
<dbReference type="GO" id="GO:0001750">
    <property type="term" value="C:photoreceptor outer segment"/>
    <property type="evidence" value="ECO:0000266"/>
    <property type="project" value="RGD"/>
</dbReference>
<dbReference type="GO" id="GO:0030141">
    <property type="term" value="C:secretory granule"/>
    <property type="evidence" value="ECO:0000314"/>
    <property type="project" value="UniProtKB"/>
</dbReference>
<dbReference type="GO" id="GO:0033093">
    <property type="term" value="C:Weibel-Palade body"/>
    <property type="evidence" value="ECO:0000314"/>
    <property type="project" value="UniProtKB"/>
</dbReference>
<dbReference type="GO" id="GO:0003925">
    <property type="term" value="F:G protein activity"/>
    <property type="evidence" value="ECO:0007669"/>
    <property type="project" value="UniProtKB-EC"/>
</dbReference>
<dbReference type="GO" id="GO:0019003">
    <property type="term" value="F:GDP binding"/>
    <property type="evidence" value="ECO:0000250"/>
    <property type="project" value="UniProtKB"/>
</dbReference>
<dbReference type="GO" id="GO:0005525">
    <property type="term" value="F:GTP binding"/>
    <property type="evidence" value="ECO:0000250"/>
    <property type="project" value="UniProtKB"/>
</dbReference>
<dbReference type="GO" id="GO:0003924">
    <property type="term" value="F:GTPase activity"/>
    <property type="evidence" value="ECO:0000250"/>
    <property type="project" value="UniProtKB"/>
</dbReference>
<dbReference type="GO" id="GO:0031489">
    <property type="term" value="F:myosin V binding"/>
    <property type="evidence" value="ECO:0000266"/>
    <property type="project" value="RGD"/>
</dbReference>
<dbReference type="GO" id="GO:0019904">
    <property type="term" value="F:protein domain specific binding"/>
    <property type="evidence" value="ECO:0000353"/>
    <property type="project" value="UniProtKB"/>
</dbReference>
<dbReference type="GO" id="GO:0019882">
    <property type="term" value="P:antigen processing and presentation"/>
    <property type="evidence" value="ECO:0000266"/>
    <property type="project" value="RGD"/>
</dbReference>
<dbReference type="GO" id="GO:0007596">
    <property type="term" value="P:blood coagulation"/>
    <property type="evidence" value="ECO:0000266"/>
    <property type="project" value="RGD"/>
</dbReference>
<dbReference type="GO" id="GO:0097278">
    <property type="term" value="P:complement-dependent cytotoxicity"/>
    <property type="evidence" value="ECO:0000266"/>
    <property type="project" value="RGD"/>
</dbReference>
<dbReference type="GO" id="GO:0043316">
    <property type="term" value="P:cytotoxic T cell degranulation"/>
    <property type="evidence" value="ECO:0000266"/>
    <property type="project" value="RGD"/>
</dbReference>
<dbReference type="GO" id="GO:0006887">
    <property type="term" value="P:exocytosis"/>
    <property type="evidence" value="ECO:0000266"/>
    <property type="project" value="RGD"/>
</dbReference>
<dbReference type="GO" id="GO:1990182">
    <property type="term" value="P:exosomal secretion"/>
    <property type="evidence" value="ECO:0000266"/>
    <property type="project" value="RGD"/>
</dbReference>
<dbReference type="GO" id="GO:0030318">
    <property type="term" value="P:melanocyte differentiation"/>
    <property type="evidence" value="ECO:0000266"/>
    <property type="project" value="RGD"/>
</dbReference>
<dbReference type="GO" id="GO:0032400">
    <property type="term" value="P:melanosome localization"/>
    <property type="evidence" value="ECO:0000266"/>
    <property type="project" value="RGD"/>
</dbReference>
<dbReference type="GO" id="GO:0032402">
    <property type="term" value="P:melanosome transport"/>
    <property type="evidence" value="ECO:0000266"/>
    <property type="project" value="RGD"/>
</dbReference>
<dbReference type="GO" id="GO:0036257">
    <property type="term" value="P:multivesicular body organization"/>
    <property type="evidence" value="ECO:0000266"/>
    <property type="project" value="RGD"/>
</dbReference>
<dbReference type="GO" id="GO:0071985">
    <property type="term" value="P:multivesicular body sorting pathway"/>
    <property type="evidence" value="ECO:0000266"/>
    <property type="project" value="RGD"/>
</dbReference>
<dbReference type="GO" id="GO:0043320">
    <property type="term" value="P:natural killer cell degranulation"/>
    <property type="evidence" value="ECO:0000266"/>
    <property type="project" value="RGD"/>
</dbReference>
<dbReference type="GO" id="GO:0051875">
    <property type="term" value="P:pigment granule localization"/>
    <property type="evidence" value="ECO:0000266"/>
    <property type="project" value="RGD"/>
</dbReference>
<dbReference type="GO" id="GO:0051904">
    <property type="term" value="P:pigment granule transport"/>
    <property type="evidence" value="ECO:0000266"/>
    <property type="project" value="RGD"/>
</dbReference>
<dbReference type="GO" id="GO:0043473">
    <property type="term" value="P:pigmentation"/>
    <property type="evidence" value="ECO:0000266"/>
    <property type="project" value="RGD"/>
</dbReference>
<dbReference type="GO" id="GO:1903435">
    <property type="term" value="P:positive regulation of constitutive secretory pathway"/>
    <property type="evidence" value="ECO:0000266"/>
    <property type="project" value="RGD"/>
</dbReference>
<dbReference type="GO" id="GO:0045921">
    <property type="term" value="P:positive regulation of exocytosis"/>
    <property type="evidence" value="ECO:0000266"/>
    <property type="project" value="RGD"/>
</dbReference>
<dbReference type="GO" id="GO:0010628">
    <property type="term" value="P:positive regulation of gene expression"/>
    <property type="evidence" value="ECO:0000266"/>
    <property type="project" value="RGD"/>
</dbReference>
<dbReference type="GO" id="GO:0050766">
    <property type="term" value="P:positive regulation of phagocytosis"/>
    <property type="evidence" value="ECO:0000266"/>
    <property type="project" value="RGD"/>
</dbReference>
<dbReference type="GO" id="GO:1903428">
    <property type="term" value="P:positive regulation of reactive oxygen species biosynthetic process"/>
    <property type="evidence" value="ECO:0000266"/>
    <property type="project" value="RGD"/>
</dbReference>
<dbReference type="GO" id="GO:1903307">
    <property type="term" value="P:positive regulation of regulated secretory pathway"/>
    <property type="evidence" value="ECO:0000266"/>
    <property type="project" value="RGD"/>
</dbReference>
<dbReference type="GO" id="GO:0009306">
    <property type="term" value="P:protein secretion"/>
    <property type="evidence" value="ECO:0000266"/>
    <property type="project" value="RGD"/>
</dbReference>
<dbReference type="GO" id="GO:0016192">
    <property type="term" value="P:vesicle-mediated transport"/>
    <property type="evidence" value="ECO:0000266"/>
    <property type="project" value="RGD"/>
</dbReference>
<dbReference type="CDD" id="cd04127">
    <property type="entry name" value="Rab27A"/>
    <property type="match status" value="1"/>
</dbReference>
<dbReference type="FunFam" id="3.40.50.300:FF:000402">
    <property type="entry name" value="Ras-related protein Rab-27A"/>
    <property type="match status" value="1"/>
</dbReference>
<dbReference type="Gene3D" id="3.40.50.300">
    <property type="entry name" value="P-loop containing nucleotide triphosphate hydrolases"/>
    <property type="match status" value="1"/>
</dbReference>
<dbReference type="InterPro" id="IPR027417">
    <property type="entry name" value="P-loop_NTPase"/>
</dbReference>
<dbReference type="InterPro" id="IPR041837">
    <property type="entry name" value="Rab27a/b"/>
</dbReference>
<dbReference type="InterPro" id="IPR005225">
    <property type="entry name" value="Small_GTP-bd"/>
</dbReference>
<dbReference type="InterPro" id="IPR001806">
    <property type="entry name" value="Small_GTPase"/>
</dbReference>
<dbReference type="InterPro" id="IPR050305">
    <property type="entry name" value="Small_GTPase_Rab"/>
</dbReference>
<dbReference type="NCBIfam" id="TIGR00231">
    <property type="entry name" value="small_GTP"/>
    <property type="match status" value="1"/>
</dbReference>
<dbReference type="PANTHER" id="PTHR47980">
    <property type="entry name" value="LD44762P"/>
    <property type="match status" value="1"/>
</dbReference>
<dbReference type="Pfam" id="PF00071">
    <property type="entry name" value="Ras"/>
    <property type="match status" value="1"/>
</dbReference>
<dbReference type="PRINTS" id="PR00449">
    <property type="entry name" value="RASTRNSFRMNG"/>
</dbReference>
<dbReference type="SMART" id="SM00175">
    <property type="entry name" value="RAB"/>
    <property type="match status" value="1"/>
</dbReference>
<dbReference type="SMART" id="SM00176">
    <property type="entry name" value="RAN"/>
    <property type="match status" value="1"/>
</dbReference>
<dbReference type="SMART" id="SM00173">
    <property type="entry name" value="RAS"/>
    <property type="match status" value="1"/>
</dbReference>
<dbReference type="SMART" id="SM00174">
    <property type="entry name" value="RHO"/>
    <property type="match status" value="1"/>
</dbReference>
<dbReference type="SUPFAM" id="SSF52540">
    <property type="entry name" value="P-loop containing nucleoside triphosphate hydrolases"/>
    <property type="match status" value="1"/>
</dbReference>
<dbReference type="PROSITE" id="PS51419">
    <property type="entry name" value="RAB"/>
    <property type="match status" value="1"/>
</dbReference>
<organism>
    <name type="scientific">Rattus norvegicus</name>
    <name type="common">Rat</name>
    <dbReference type="NCBI Taxonomy" id="10116"/>
    <lineage>
        <taxon>Eukaryota</taxon>
        <taxon>Metazoa</taxon>
        <taxon>Chordata</taxon>
        <taxon>Craniata</taxon>
        <taxon>Vertebrata</taxon>
        <taxon>Euteleostomi</taxon>
        <taxon>Mammalia</taxon>
        <taxon>Eutheria</taxon>
        <taxon>Euarchontoglires</taxon>
        <taxon>Glires</taxon>
        <taxon>Rodentia</taxon>
        <taxon>Myomorpha</taxon>
        <taxon>Muroidea</taxon>
        <taxon>Muridae</taxon>
        <taxon>Murinae</taxon>
        <taxon>Rattus</taxon>
    </lineage>
</organism>
<evidence type="ECO:0000250" key="1"/>
<evidence type="ECO:0000250" key="2">
    <source>
        <dbReference type="UniProtKB" id="P51159"/>
    </source>
</evidence>
<evidence type="ECO:0000250" key="3">
    <source>
        <dbReference type="UniProtKB" id="Q9ERI2"/>
    </source>
</evidence>
<evidence type="ECO:0000269" key="4">
    <source>
    </source>
</evidence>
<evidence type="ECO:0000305" key="5"/>
<name>RB27A_RAT</name>
<accession>P23640</accession>
<accession>Q4KMA7</accession>
<feature type="initiator methionine" description="Removed" evidence="2">
    <location>
        <position position="1"/>
    </location>
</feature>
<feature type="chain" id="PRO_0000121223" description="Ras-related protein Rab-27A">
    <location>
        <begin position="2"/>
        <end position="221"/>
    </location>
</feature>
<feature type="short sequence motif" description="Effector region" evidence="1">
    <location>
        <begin position="38"/>
        <end position="46"/>
    </location>
</feature>
<feature type="binding site" evidence="1">
    <location>
        <begin position="16"/>
        <end position="24"/>
    </location>
    <ligand>
        <name>GTP</name>
        <dbReference type="ChEBI" id="CHEBI:37565"/>
    </ligand>
</feature>
<feature type="binding site" evidence="1">
    <location>
        <begin position="74"/>
        <end position="78"/>
    </location>
    <ligand>
        <name>GTP</name>
        <dbReference type="ChEBI" id="CHEBI:37565"/>
    </ligand>
</feature>
<feature type="binding site" evidence="1">
    <location>
        <begin position="133"/>
        <end position="136"/>
    </location>
    <ligand>
        <name>GTP</name>
        <dbReference type="ChEBI" id="CHEBI:37565"/>
    </ligand>
</feature>
<feature type="binding site" evidence="1">
    <location>
        <begin position="163"/>
        <end position="165"/>
    </location>
    <ligand>
        <name>GTP</name>
        <dbReference type="ChEBI" id="CHEBI:37565"/>
    </ligand>
</feature>
<feature type="modified residue" description="N-acetylserine" evidence="2">
    <location>
        <position position="2"/>
    </location>
</feature>
<feature type="modified residue" description="Phosphoserine" evidence="2">
    <location>
        <position position="2"/>
    </location>
</feature>
<feature type="modified residue" description="Cysteine methyl ester" evidence="1">
    <location>
        <position position="221"/>
    </location>
</feature>
<feature type="lipid moiety-binding region" description="S-geranylgeranyl cysteine" evidence="1">
    <location>
        <position position="219"/>
    </location>
</feature>
<feature type="lipid moiety-binding region" description="S-geranylgeranyl cysteine" evidence="1">
    <location>
        <position position="221"/>
    </location>
</feature>
<feature type="disulfide bond" evidence="1">
    <location>
        <begin position="123"/>
        <end position="188"/>
    </location>
</feature>
<feature type="mutagenesis site" description="No binding of GTP and GDP." evidence="4">
    <original>G</original>
    <variation>V</variation>
    <location>
        <position position="19"/>
    </location>
</feature>
<feature type="mutagenesis site" description="Increased rates of GTP binding and GDP dissociation." evidence="4">
    <original>T</original>
    <variation>S</variation>
    <location>
        <position position="41"/>
    </location>
</feature>
<feature type="mutagenesis site" description="Increased rates of GTP binding and GDP dissociation." evidence="4">
    <original>A</original>
    <variation>T</variation>
    <location>
        <position position="76"/>
    </location>
</feature>
<feature type="mutagenesis site" description="Increased GTP dissociation and decreased GDP hydrolysis." evidence="4">
    <original>Q</original>
    <variation>L</variation>
    <location>
        <position position="78"/>
    </location>
</feature>
<feature type="mutagenesis site" description="Increased rates of GTP binding and GDP dissociation." evidence="4">
    <original>N</original>
    <variation>H</variation>
    <location>
        <position position="133"/>
    </location>
</feature>
<gene>
    <name type="primary">Rab27a</name>
    <name type="synonym">Rab27</name>
</gene>
<sequence>MSDGDYDYLIKFLALGDSGVGKTSVLYQYTDGKFNSKFITTVGIDFREKRVVYRANGPDGTVGRGQRIHLQLWDTAGQERFRSLTTAFFRDAMGFLLLFDLTNEQSFLNVRNWISQLQMHAYCENPDIVLCGNKSDLEDQRAVKEEEARELAEKYGIPYFETSAANGTNISQAIEMLLDLIMKRMERCVDKSWIPEGVVRSNGHTSTDQLSEEKEKGLCGC</sequence>
<keyword id="KW-0007">Acetylation</keyword>
<keyword id="KW-1015">Disulfide bond</keyword>
<keyword id="KW-0967">Endosome</keyword>
<keyword id="KW-0268">Exocytosis</keyword>
<keyword id="KW-0342">GTP-binding</keyword>
<keyword id="KW-0378">Hydrolase</keyword>
<keyword id="KW-0449">Lipoprotein</keyword>
<keyword id="KW-0458">Lysosome</keyword>
<keyword id="KW-0472">Membrane</keyword>
<keyword id="KW-0488">Methylation</keyword>
<keyword id="KW-0547">Nucleotide-binding</keyword>
<keyword id="KW-0597">Phosphoprotein</keyword>
<keyword id="KW-0636">Prenylation</keyword>
<keyword id="KW-1185">Reference proteome</keyword>
<reference key="1">
    <citation type="journal article" date="1990" name="FEBS Lett.">
        <title>The ram: a novel low molecular weight GTP-binding protein cDNA from a rat megakaryocyte library.</title>
        <authorList>
            <person name="Nagata K."/>
            <person name="Satoh T."/>
            <person name="Itoh H."/>
            <person name="Kozasa T."/>
            <person name="Okano Y."/>
            <person name="Doi T."/>
            <person name="Kaziro Y."/>
            <person name="Nozawa Y."/>
        </authorList>
    </citation>
    <scope>NUCLEOTIDE SEQUENCE [MRNA]</scope>
    <source>
        <tissue>Megakaryocyte</tissue>
    </source>
</reference>
<reference key="2">
    <citation type="journal article" date="2004" name="Genome Res.">
        <title>The status, quality, and expansion of the NIH full-length cDNA project: the Mammalian Gene Collection (MGC).</title>
        <authorList>
            <consortium name="The MGC Project Team"/>
        </authorList>
    </citation>
    <scope>NUCLEOTIDE SEQUENCE [LARGE SCALE MRNA]</scope>
    <source>
        <tissue>Thymus</tissue>
    </source>
</reference>
<reference key="3">
    <citation type="journal article" date="1992" name="J. Biol. Chem.">
        <title>Characterization and site-directed mutagenesis of a low M(r) GTP-binding protein, ram p25, expressed in Escherichia coli.</title>
        <authorList>
            <person name="Nagata K."/>
            <person name="Suzuki T."/>
            <person name="Shibagaki Y."/>
            <person name="Mizumoto K."/>
            <person name="Okano Y."/>
            <person name="Kaziro Y."/>
            <person name="Nozawa Y."/>
        </authorList>
    </citation>
    <scope>CHARACTERIZATION</scope>
    <scope>MUTAGENESIS</scope>
</reference>